<name>URE2_BURM1</name>
<keyword id="KW-0963">Cytoplasm</keyword>
<keyword id="KW-0378">Hydrolase</keyword>
<keyword id="KW-1185">Reference proteome</keyword>
<feature type="chain" id="PRO_1000188916" description="Urease subunit beta">
    <location>
        <begin position="1"/>
        <end position="101"/>
    </location>
</feature>
<reference key="1">
    <citation type="submission" date="2007-10" db="EMBL/GenBank/DDBJ databases">
        <title>Complete sequence of chromosome 1 of Burkholderia multivorans ATCC 17616.</title>
        <authorList>
            <person name="Copeland A."/>
            <person name="Lucas S."/>
            <person name="Lapidus A."/>
            <person name="Barry K."/>
            <person name="Glavina del Rio T."/>
            <person name="Dalin E."/>
            <person name="Tice H."/>
            <person name="Pitluck S."/>
            <person name="Chain P."/>
            <person name="Malfatti S."/>
            <person name="Shin M."/>
            <person name="Vergez L."/>
            <person name="Schmutz J."/>
            <person name="Larimer F."/>
            <person name="Land M."/>
            <person name="Hauser L."/>
            <person name="Kyrpides N."/>
            <person name="Kim E."/>
            <person name="Tiedje J."/>
            <person name="Richardson P."/>
        </authorList>
    </citation>
    <scope>NUCLEOTIDE SEQUENCE [LARGE SCALE GENOMIC DNA]</scope>
    <source>
        <strain>ATCC 17616 / 249</strain>
    </source>
</reference>
<reference key="2">
    <citation type="submission" date="2007-04" db="EMBL/GenBank/DDBJ databases">
        <title>Complete genome sequence of Burkholderia multivorans ATCC 17616.</title>
        <authorList>
            <person name="Ohtsubo Y."/>
            <person name="Yamashita A."/>
            <person name="Kurokawa K."/>
            <person name="Takami H."/>
            <person name="Yuhara S."/>
            <person name="Nishiyama E."/>
            <person name="Endo R."/>
            <person name="Miyazaki R."/>
            <person name="Ono A."/>
            <person name="Yano K."/>
            <person name="Ito M."/>
            <person name="Sota M."/>
            <person name="Yuji N."/>
            <person name="Hattori M."/>
            <person name="Tsuda M."/>
        </authorList>
    </citation>
    <scope>NUCLEOTIDE SEQUENCE [LARGE SCALE GENOMIC DNA]</scope>
    <source>
        <strain>ATCC 17616 / 249</strain>
    </source>
</reference>
<proteinExistence type="inferred from homology"/>
<evidence type="ECO:0000255" key="1">
    <source>
        <dbReference type="HAMAP-Rule" id="MF_01954"/>
    </source>
</evidence>
<protein>
    <recommendedName>
        <fullName evidence="1">Urease subunit beta</fullName>
        <ecNumber evidence="1">3.5.1.5</ecNumber>
    </recommendedName>
    <alternativeName>
        <fullName evidence="1">Urea amidohydrolase subunit beta</fullName>
    </alternativeName>
</protein>
<organism>
    <name type="scientific">Burkholderia multivorans (strain ATCC 17616 / 249)</name>
    <dbReference type="NCBI Taxonomy" id="395019"/>
    <lineage>
        <taxon>Bacteria</taxon>
        <taxon>Pseudomonadati</taxon>
        <taxon>Pseudomonadota</taxon>
        <taxon>Betaproteobacteria</taxon>
        <taxon>Burkholderiales</taxon>
        <taxon>Burkholderiaceae</taxon>
        <taxon>Burkholderia</taxon>
        <taxon>Burkholderia cepacia complex</taxon>
    </lineage>
</organism>
<accession>A9AF71</accession>
<dbReference type="EC" id="3.5.1.5" evidence="1"/>
<dbReference type="EMBL" id="CP000868">
    <property type="protein sequence ID" value="ABX16173.1"/>
    <property type="molecule type" value="Genomic_DNA"/>
</dbReference>
<dbReference type="EMBL" id="AP009385">
    <property type="protein sequence ID" value="BAG42708.1"/>
    <property type="molecule type" value="Genomic_DNA"/>
</dbReference>
<dbReference type="RefSeq" id="WP_006414634.1">
    <property type="nucleotide sequence ID" value="NC_010084.1"/>
</dbReference>
<dbReference type="SMR" id="A9AF71"/>
<dbReference type="STRING" id="395019.BMULJ_00747"/>
<dbReference type="GeneID" id="89569177"/>
<dbReference type="KEGG" id="bmj:BMULJ_00747"/>
<dbReference type="KEGG" id="bmu:Bmul_2489"/>
<dbReference type="eggNOG" id="COG0832">
    <property type="taxonomic scope" value="Bacteria"/>
</dbReference>
<dbReference type="HOGENOM" id="CLU_129707_1_1_4"/>
<dbReference type="UniPathway" id="UPA00258">
    <property type="reaction ID" value="UER00370"/>
</dbReference>
<dbReference type="Proteomes" id="UP000008815">
    <property type="component" value="Chromosome 1"/>
</dbReference>
<dbReference type="GO" id="GO:0035550">
    <property type="term" value="C:urease complex"/>
    <property type="evidence" value="ECO:0007669"/>
    <property type="project" value="InterPro"/>
</dbReference>
<dbReference type="GO" id="GO:0009039">
    <property type="term" value="F:urease activity"/>
    <property type="evidence" value="ECO:0007669"/>
    <property type="project" value="UniProtKB-UniRule"/>
</dbReference>
<dbReference type="GO" id="GO:0043419">
    <property type="term" value="P:urea catabolic process"/>
    <property type="evidence" value="ECO:0007669"/>
    <property type="project" value="UniProtKB-UniRule"/>
</dbReference>
<dbReference type="CDD" id="cd00407">
    <property type="entry name" value="Urease_beta"/>
    <property type="match status" value="1"/>
</dbReference>
<dbReference type="FunFam" id="2.10.150.10:FF:000001">
    <property type="entry name" value="Urease subunit beta"/>
    <property type="match status" value="1"/>
</dbReference>
<dbReference type="Gene3D" id="2.10.150.10">
    <property type="entry name" value="Urease, beta subunit"/>
    <property type="match status" value="1"/>
</dbReference>
<dbReference type="HAMAP" id="MF_01954">
    <property type="entry name" value="Urease_beta"/>
    <property type="match status" value="1"/>
</dbReference>
<dbReference type="InterPro" id="IPR002019">
    <property type="entry name" value="Urease_beta-like"/>
</dbReference>
<dbReference type="InterPro" id="IPR036461">
    <property type="entry name" value="Urease_betasu_sf"/>
</dbReference>
<dbReference type="InterPro" id="IPR050069">
    <property type="entry name" value="Urease_subunit"/>
</dbReference>
<dbReference type="NCBIfam" id="NF009682">
    <property type="entry name" value="PRK13203.1"/>
    <property type="match status" value="1"/>
</dbReference>
<dbReference type="NCBIfam" id="TIGR00192">
    <property type="entry name" value="urease_beta"/>
    <property type="match status" value="1"/>
</dbReference>
<dbReference type="PANTHER" id="PTHR33569">
    <property type="entry name" value="UREASE"/>
    <property type="match status" value="1"/>
</dbReference>
<dbReference type="PANTHER" id="PTHR33569:SF1">
    <property type="entry name" value="UREASE"/>
    <property type="match status" value="1"/>
</dbReference>
<dbReference type="Pfam" id="PF00699">
    <property type="entry name" value="Urease_beta"/>
    <property type="match status" value="1"/>
</dbReference>
<dbReference type="SUPFAM" id="SSF51278">
    <property type="entry name" value="Urease, beta-subunit"/>
    <property type="match status" value="1"/>
</dbReference>
<sequence length="101" mass="10899">MIPGEILTDDGEHELNAGRATITLVVANTGDRPVQVGSHYHFYEVNDALAFDREAARGFRLNIAAGTAVRFEPGQTRTVELVALAGDRVVYGFQGKVMGPL</sequence>
<gene>
    <name evidence="1" type="primary">ureB</name>
    <name type="ordered locus">Bmul_2489</name>
    <name type="ordered locus">BMULJ_00747</name>
</gene>
<comment type="catalytic activity">
    <reaction evidence="1">
        <text>urea + 2 H2O + H(+) = hydrogencarbonate + 2 NH4(+)</text>
        <dbReference type="Rhea" id="RHEA:20557"/>
        <dbReference type="ChEBI" id="CHEBI:15377"/>
        <dbReference type="ChEBI" id="CHEBI:15378"/>
        <dbReference type="ChEBI" id="CHEBI:16199"/>
        <dbReference type="ChEBI" id="CHEBI:17544"/>
        <dbReference type="ChEBI" id="CHEBI:28938"/>
        <dbReference type="EC" id="3.5.1.5"/>
    </reaction>
</comment>
<comment type="pathway">
    <text evidence="1">Nitrogen metabolism; urea degradation; CO(2) and NH(3) from urea (urease route): step 1/1.</text>
</comment>
<comment type="subunit">
    <text evidence="1">Heterotrimer of UreA (gamma), UreB (beta) and UreC (alpha) subunits. Three heterotrimers associate to form the active enzyme.</text>
</comment>
<comment type="subcellular location">
    <subcellularLocation>
        <location evidence="1">Cytoplasm</location>
    </subcellularLocation>
</comment>
<comment type="similarity">
    <text evidence="1">Belongs to the urease beta subunit family.</text>
</comment>